<reference key="1">
    <citation type="journal article" date="2006" name="J. Bacteriol.">
        <title>Complete genome sequence of the dehalorespiring bacterium Desulfitobacterium hafniense Y51 and comparison with Dehalococcoides ethenogenes 195.</title>
        <authorList>
            <person name="Nonaka H."/>
            <person name="Keresztes G."/>
            <person name="Shinoda Y."/>
            <person name="Ikenaga Y."/>
            <person name="Abe M."/>
            <person name="Naito K."/>
            <person name="Inatomi K."/>
            <person name="Furukawa K."/>
            <person name="Inui M."/>
            <person name="Yukawa H."/>
        </authorList>
    </citation>
    <scope>NUCLEOTIDE SEQUENCE [LARGE SCALE GENOMIC DNA]</scope>
    <source>
        <strain>Y51</strain>
    </source>
</reference>
<proteinExistence type="inferred from homology"/>
<keyword id="KW-0067">ATP-binding</keyword>
<keyword id="KW-0414">Isoprene biosynthesis</keyword>
<keyword id="KW-0418">Kinase</keyword>
<keyword id="KW-0547">Nucleotide-binding</keyword>
<keyword id="KW-1185">Reference proteome</keyword>
<keyword id="KW-0808">Transferase</keyword>
<comment type="function">
    <text evidence="1">Catalyzes the phosphorylation of the position 2 hydroxy group of 4-diphosphocytidyl-2C-methyl-D-erythritol.</text>
</comment>
<comment type="catalytic activity">
    <reaction evidence="1">
        <text>4-CDP-2-C-methyl-D-erythritol + ATP = 4-CDP-2-C-methyl-D-erythritol 2-phosphate + ADP + H(+)</text>
        <dbReference type="Rhea" id="RHEA:18437"/>
        <dbReference type="ChEBI" id="CHEBI:15378"/>
        <dbReference type="ChEBI" id="CHEBI:30616"/>
        <dbReference type="ChEBI" id="CHEBI:57823"/>
        <dbReference type="ChEBI" id="CHEBI:57919"/>
        <dbReference type="ChEBI" id="CHEBI:456216"/>
        <dbReference type="EC" id="2.7.1.148"/>
    </reaction>
</comment>
<comment type="pathway">
    <text evidence="1">Isoprenoid biosynthesis; isopentenyl diphosphate biosynthesis via DXP pathway; isopentenyl diphosphate from 1-deoxy-D-xylulose 5-phosphate: step 3/6.</text>
</comment>
<comment type="similarity">
    <text evidence="1">Belongs to the GHMP kinase family. IspE subfamily.</text>
</comment>
<feature type="chain" id="PRO_0000335710" description="4-diphosphocytidyl-2-C-methyl-D-erythritol kinase">
    <location>
        <begin position="1"/>
        <end position="290"/>
    </location>
</feature>
<feature type="active site" evidence="1">
    <location>
        <position position="13"/>
    </location>
</feature>
<feature type="active site" evidence="1">
    <location>
        <position position="135"/>
    </location>
</feature>
<feature type="binding site" evidence="1">
    <location>
        <begin position="93"/>
        <end position="103"/>
    </location>
    <ligand>
        <name>ATP</name>
        <dbReference type="ChEBI" id="CHEBI:30616"/>
    </ligand>
</feature>
<name>ISPE_DESHY</name>
<dbReference type="EC" id="2.7.1.148" evidence="1"/>
<dbReference type="EMBL" id="AP008230">
    <property type="protein sequence ID" value="BAE81937.1"/>
    <property type="molecule type" value="Genomic_DNA"/>
</dbReference>
<dbReference type="RefSeq" id="WP_011458917.1">
    <property type="nucleotide sequence ID" value="NC_007907.1"/>
</dbReference>
<dbReference type="SMR" id="Q251V5"/>
<dbReference type="STRING" id="138119.DSY0148"/>
<dbReference type="KEGG" id="dsy:DSY0148"/>
<dbReference type="eggNOG" id="COG1947">
    <property type="taxonomic scope" value="Bacteria"/>
</dbReference>
<dbReference type="HOGENOM" id="CLU_053057_1_1_9"/>
<dbReference type="UniPathway" id="UPA00056">
    <property type="reaction ID" value="UER00094"/>
</dbReference>
<dbReference type="Proteomes" id="UP000001946">
    <property type="component" value="Chromosome"/>
</dbReference>
<dbReference type="GO" id="GO:0050515">
    <property type="term" value="F:4-(cytidine 5'-diphospho)-2-C-methyl-D-erythritol kinase activity"/>
    <property type="evidence" value="ECO:0007669"/>
    <property type="project" value="UniProtKB-UniRule"/>
</dbReference>
<dbReference type="GO" id="GO:0005524">
    <property type="term" value="F:ATP binding"/>
    <property type="evidence" value="ECO:0007669"/>
    <property type="project" value="UniProtKB-UniRule"/>
</dbReference>
<dbReference type="GO" id="GO:0019288">
    <property type="term" value="P:isopentenyl diphosphate biosynthetic process, methylerythritol 4-phosphate pathway"/>
    <property type="evidence" value="ECO:0007669"/>
    <property type="project" value="UniProtKB-UniRule"/>
</dbReference>
<dbReference type="GO" id="GO:0016114">
    <property type="term" value="P:terpenoid biosynthetic process"/>
    <property type="evidence" value="ECO:0007669"/>
    <property type="project" value="InterPro"/>
</dbReference>
<dbReference type="Gene3D" id="3.30.230.10">
    <property type="match status" value="1"/>
</dbReference>
<dbReference type="Gene3D" id="3.30.70.890">
    <property type="entry name" value="GHMP kinase, C-terminal domain"/>
    <property type="match status" value="1"/>
</dbReference>
<dbReference type="HAMAP" id="MF_00061">
    <property type="entry name" value="IspE"/>
    <property type="match status" value="1"/>
</dbReference>
<dbReference type="InterPro" id="IPR013750">
    <property type="entry name" value="GHMP_kinase_C_dom"/>
</dbReference>
<dbReference type="InterPro" id="IPR036554">
    <property type="entry name" value="GHMP_kinase_C_sf"/>
</dbReference>
<dbReference type="InterPro" id="IPR006204">
    <property type="entry name" value="GHMP_kinase_N_dom"/>
</dbReference>
<dbReference type="InterPro" id="IPR004424">
    <property type="entry name" value="IspE"/>
</dbReference>
<dbReference type="InterPro" id="IPR020568">
    <property type="entry name" value="Ribosomal_Su5_D2-typ_SF"/>
</dbReference>
<dbReference type="InterPro" id="IPR014721">
    <property type="entry name" value="Ribsml_uS5_D2-typ_fold_subgr"/>
</dbReference>
<dbReference type="NCBIfam" id="TIGR00154">
    <property type="entry name" value="ispE"/>
    <property type="match status" value="1"/>
</dbReference>
<dbReference type="NCBIfam" id="NF011202">
    <property type="entry name" value="PRK14608.1"/>
    <property type="match status" value="1"/>
</dbReference>
<dbReference type="PANTHER" id="PTHR43527">
    <property type="entry name" value="4-DIPHOSPHOCYTIDYL-2-C-METHYL-D-ERYTHRITOL KINASE, CHLOROPLASTIC"/>
    <property type="match status" value="1"/>
</dbReference>
<dbReference type="PANTHER" id="PTHR43527:SF2">
    <property type="entry name" value="4-DIPHOSPHOCYTIDYL-2-C-METHYL-D-ERYTHRITOL KINASE, CHLOROPLASTIC"/>
    <property type="match status" value="1"/>
</dbReference>
<dbReference type="Pfam" id="PF08544">
    <property type="entry name" value="GHMP_kinases_C"/>
    <property type="match status" value="1"/>
</dbReference>
<dbReference type="Pfam" id="PF00288">
    <property type="entry name" value="GHMP_kinases_N"/>
    <property type="match status" value="1"/>
</dbReference>
<dbReference type="PIRSF" id="PIRSF010376">
    <property type="entry name" value="IspE"/>
    <property type="match status" value="1"/>
</dbReference>
<dbReference type="SUPFAM" id="SSF55060">
    <property type="entry name" value="GHMP Kinase, C-terminal domain"/>
    <property type="match status" value="1"/>
</dbReference>
<dbReference type="SUPFAM" id="SSF54211">
    <property type="entry name" value="Ribosomal protein S5 domain 2-like"/>
    <property type="match status" value="1"/>
</dbReference>
<accession>Q251V5</accession>
<evidence type="ECO:0000255" key="1">
    <source>
        <dbReference type="HAMAP-Rule" id="MF_00061"/>
    </source>
</evidence>
<sequence length="290" mass="31504">MIRNQVEMFAYAKINLALAITGRRPDGYHELESVMQSIGIYDRIRVTLAEGGIQCSCGEWSGPENLAYRAAEAFLSGLGSSQGIHIDIEKNIPVQAGLGGGSADAAAALQALNKLFKEPYTEEELKSFAAQLGADVAFCLKGGTQWATGVGEELKGLPHAPKINLVLIKPDQGVNTAEAYRAFDQEGKFSHLDYAGWQEALASGRAESLIPLLYNDLEPASMKLLPEIAWVKEELMKQNGCLGALMSGSGSAVFGIVQTEEQAEKIAAIWRERNYHVWVTHTMERGNIYG</sequence>
<gene>
    <name evidence="1" type="primary">ispE</name>
    <name type="ordered locus">DSY0148</name>
</gene>
<protein>
    <recommendedName>
        <fullName evidence="1">4-diphosphocytidyl-2-C-methyl-D-erythritol kinase</fullName>
        <shortName evidence="1">CMK</shortName>
        <ecNumber evidence="1">2.7.1.148</ecNumber>
    </recommendedName>
    <alternativeName>
        <fullName evidence="1">4-(cytidine-5'-diphospho)-2-C-methyl-D-erythritol kinase</fullName>
    </alternativeName>
</protein>
<organism>
    <name type="scientific">Desulfitobacterium hafniense (strain Y51)</name>
    <dbReference type="NCBI Taxonomy" id="138119"/>
    <lineage>
        <taxon>Bacteria</taxon>
        <taxon>Bacillati</taxon>
        <taxon>Bacillota</taxon>
        <taxon>Clostridia</taxon>
        <taxon>Eubacteriales</taxon>
        <taxon>Desulfitobacteriaceae</taxon>
        <taxon>Desulfitobacterium</taxon>
    </lineage>
</organism>